<evidence type="ECO:0000250" key="1"/>
<evidence type="ECO:0000250" key="2">
    <source>
        <dbReference type="UniProtKB" id="P10238"/>
    </source>
</evidence>
<evidence type="ECO:0000256" key="3">
    <source>
        <dbReference type="SAM" id="MobiDB-lite"/>
    </source>
</evidence>
<evidence type="ECO:0000305" key="4"/>
<comment type="function">
    <text evidence="1">Immediate early (EI) protein that plays many roles during productive infection including regulation of viral gene expression and nuclear export of intronless viral RNAs.</text>
</comment>
<comment type="subcellular location">
    <subcellularLocation>
        <location evidence="1">Virion tegument</location>
    </subcellularLocation>
    <subcellularLocation>
        <location evidence="1">Virion</location>
    </subcellularLocation>
    <subcellularLocation>
        <location>Host nucleus</location>
    </subcellularLocation>
    <subcellularLocation>
        <location>Host cytoplasm</location>
    </subcellularLocation>
    <text>Shuttles between host nucleus and cytoplasm.</text>
</comment>
<comment type="similarity">
    <text evidence="4">Belongs to the HHV-1 ICP27 protein family.</text>
</comment>
<accession>P52354</accession>
<proteinExistence type="inferred from homology"/>
<feature type="chain" id="PRO_0000115828" description="mRNA export factor ICP27 homolog">
    <location>
        <begin position="1"/>
        <end position="515"/>
    </location>
</feature>
<feature type="zinc finger region" description="CHC2-type" evidence="2">
    <location>
        <begin position="230"/>
        <end position="342"/>
    </location>
</feature>
<feature type="region of interest" description="Disordered" evidence="3">
    <location>
        <begin position="398"/>
        <end position="422"/>
    </location>
</feature>
<feature type="compositionally biased region" description="Polar residues" evidence="3">
    <location>
        <begin position="398"/>
        <end position="408"/>
    </location>
</feature>
<feature type="compositionally biased region" description="Basic residues" evidence="3">
    <location>
        <begin position="409"/>
        <end position="422"/>
    </location>
</feature>
<feature type="binding site" evidence="2">
    <location>
        <position position="230"/>
    </location>
    <ligand>
        <name>Zn(2+)</name>
        <dbReference type="ChEBI" id="CHEBI:29105"/>
    </ligand>
</feature>
<feature type="binding site" evidence="2">
    <location>
        <position position="335"/>
    </location>
    <ligand>
        <name>Zn(2+)</name>
        <dbReference type="ChEBI" id="CHEBI:29105"/>
    </ligand>
</feature>
<feature type="binding site" evidence="2">
    <location>
        <position position="337"/>
    </location>
    <ligand>
        <name>Zn(2+)</name>
        <dbReference type="ChEBI" id="CHEBI:29105"/>
    </ligand>
</feature>
<feature type="binding site" evidence="2">
    <location>
        <position position="342"/>
    </location>
    <ligand>
        <name>Zn(2+)</name>
        <dbReference type="ChEBI" id="CHEBI:29105"/>
    </ligand>
</feature>
<feature type="sequence conflict" description="In Ref. 1; CAA58376." evidence="4" ref="1">
    <original>QLD</original>
    <variation>HC</variation>
    <location>
        <begin position="50"/>
        <end position="52"/>
    </location>
</feature>
<name>ICP27_HHV6U</name>
<organism>
    <name type="scientific">Human herpesvirus 6A (strain Uganda-1102)</name>
    <name type="common">HHV-6 variant A</name>
    <name type="synonym">Human B lymphotropic virus</name>
    <dbReference type="NCBI Taxonomy" id="10370"/>
    <lineage>
        <taxon>Viruses</taxon>
        <taxon>Duplodnaviria</taxon>
        <taxon>Heunggongvirae</taxon>
        <taxon>Peploviricota</taxon>
        <taxon>Herviviricetes</taxon>
        <taxon>Herpesvirales</taxon>
        <taxon>Orthoherpesviridae</taxon>
        <taxon>Betaherpesvirinae</taxon>
        <taxon>Roseolovirus</taxon>
        <taxon>Roseolovirus humanbeta6a</taxon>
        <taxon>Human betaherpesvirus 6A</taxon>
    </lineage>
</organism>
<protein>
    <recommendedName>
        <fullName>mRNA export factor ICP27 homolog</fullName>
    </recommendedName>
</protein>
<keyword id="KW-1035">Host cytoplasm</keyword>
<keyword id="KW-1048">Host nucleus</keyword>
<keyword id="KW-0479">Metal-binding</keyword>
<keyword id="KW-1185">Reference proteome</keyword>
<keyword id="KW-0804">Transcription</keyword>
<keyword id="KW-0805">Transcription regulation</keyword>
<keyword id="KW-0946">Virion</keyword>
<keyword id="KW-0920">Virion tegument</keyword>
<keyword id="KW-0862">Zinc</keyword>
<keyword id="KW-0863">Zinc-finger</keyword>
<dbReference type="EMBL" id="X83413">
    <property type="protein sequence ID" value="CAA58376.2"/>
    <property type="molecule type" value="Genomic_DNA"/>
</dbReference>
<dbReference type="EMBL" id="X92436">
    <property type="protein sequence ID" value="CAA63168.1"/>
    <property type="molecule type" value="Genomic_DNA"/>
</dbReference>
<dbReference type="RefSeq" id="NP_042935.1">
    <property type="nucleotide sequence ID" value="NC_001664.2"/>
</dbReference>
<dbReference type="SMR" id="P52354"/>
<dbReference type="GeneID" id="1487920"/>
<dbReference type="KEGG" id="vg:1487920"/>
<dbReference type="Proteomes" id="UP000009295">
    <property type="component" value="Segment"/>
</dbReference>
<dbReference type="GO" id="GO:0030430">
    <property type="term" value="C:host cell cytoplasm"/>
    <property type="evidence" value="ECO:0007669"/>
    <property type="project" value="UniProtKB-SubCell"/>
</dbReference>
<dbReference type="GO" id="GO:0042025">
    <property type="term" value="C:host cell nucleus"/>
    <property type="evidence" value="ECO:0007669"/>
    <property type="project" value="UniProtKB-SubCell"/>
</dbReference>
<dbReference type="GO" id="GO:0019033">
    <property type="term" value="C:viral tegument"/>
    <property type="evidence" value="ECO:0007669"/>
    <property type="project" value="UniProtKB-SubCell"/>
</dbReference>
<dbReference type="GO" id="GO:0008270">
    <property type="term" value="F:zinc ion binding"/>
    <property type="evidence" value="ECO:0007669"/>
    <property type="project" value="UniProtKB-KW"/>
</dbReference>
<dbReference type="GO" id="GO:0006355">
    <property type="term" value="P:regulation of DNA-templated transcription"/>
    <property type="evidence" value="ECO:0007669"/>
    <property type="project" value="InterPro"/>
</dbReference>
<dbReference type="InterPro" id="IPR008648">
    <property type="entry name" value="ICP27-like"/>
</dbReference>
<dbReference type="Pfam" id="PF05459">
    <property type="entry name" value="Herpes_UL69"/>
    <property type="match status" value="1"/>
</dbReference>
<sequence>MYPRGVKRSHHDYHRQTAFRTIKRSTHRQTSKFISHFAKNFRGKLAPLKQLDESRLDALSLTELEQLKTIIEEKQQEKRAQNNAITFLPNLPTVPFADTNFSLKSLGLRPYNGDARDPKQRIRDRFPQTHERICLLTNDILETDLLLRYRQCLDSLTREENQQLMGDRIFSLTNSPCLAFTVATVEEACSYFKFHDLHNLPVNPQDLFMYTITVMKFEFFNKLNMAKLTCVFNDNGHGDIEYRKLRQLCGKPVLDREMPNSELEVQQQTPDSFRHPIQQAMSIVVTFARILRQIKEQIIQTKKPQFIRDFDTGRVAERYECGLMSRLIGKQFSNHKCDDVSCQNRIERIMAPWKPSLFFCTYFAKDAPKFKLFPNFPEEYRNLSFTCPKVDTEPSCSYSTNHDLPQTSHRSHKNHGTPKVKSKVCVEKPDTSILTTTKTTTEILIEESMETDNKIPNPRELNFNQAKQEEIVIININENVNSKHESESSVEMDLDLDYEADTCETNLNACSSDSE</sequence>
<gene>
    <name type="ORF">U42</name>
</gene>
<reference key="1">
    <citation type="journal article" date="1995" name="Virology">
        <title>The DNA sequence of human herpesvirus-6: structure, coding content, and genome evolution.</title>
        <authorList>
            <person name="Gompels U.A."/>
            <person name="Nicholas J."/>
            <person name="Lawrence G.L."/>
            <person name="Jones M."/>
            <person name="Thomson B.J."/>
            <person name="Martin M.E.D."/>
            <person name="Efstathiou S."/>
            <person name="Craxton M.A."/>
            <person name="Macaulay H.A."/>
        </authorList>
    </citation>
    <scope>NUCLEOTIDE SEQUENCE [LARGE SCALE GENOMIC DNA]</scope>
</reference>
<organismHost>
    <name type="scientific">Homo sapiens</name>
    <name type="common">Human</name>
    <dbReference type="NCBI Taxonomy" id="9606"/>
</organismHost>